<gene>
    <name evidence="1" type="primary">kptA</name>
    <name type="ordered locus">TV0196</name>
    <name type="ORF">TVG0201215</name>
</gene>
<dbReference type="EC" id="2.7.1.-" evidence="1"/>
<dbReference type="EMBL" id="BA000011">
    <property type="protein sequence ID" value="BAB59338.1"/>
    <property type="molecule type" value="Genomic_DNA"/>
</dbReference>
<dbReference type="RefSeq" id="WP_010916452.1">
    <property type="nucleotide sequence ID" value="NC_002689.2"/>
</dbReference>
<dbReference type="SMR" id="Q97CA6"/>
<dbReference type="STRING" id="273116.gene:9380966"/>
<dbReference type="PaxDb" id="273116-14324410"/>
<dbReference type="GeneID" id="1441682"/>
<dbReference type="KEGG" id="tvo:TVG0201215"/>
<dbReference type="eggNOG" id="arCOG04063">
    <property type="taxonomic scope" value="Archaea"/>
</dbReference>
<dbReference type="HOGENOM" id="CLU_052998_4_1_2"/>
<dbReference type="OrthoDB" id="24376at2157"/>
<dbReference type="PhylomeDB" id="Q97CA6"/>
<dbReference type="Proteomes" id="UP000001017">
    <property type="component" value="Chromosome"/>
</dbReference>
<dbReference type="GO" id="GO:0003950">
    <property type="term" value="F:NAD+ poly-ADP-ribosyltransferase activity"/>
    <property type="evidence" value="ECO:0007669"/>
    <property type="project" value="InterPro"/>
</dbReference>
<dbReference type="GO" id="GO:0000215">
    <property type="term" value="F:tRNA 2'-phosphotransferase activity"/>
    <property type="evidence" value="ECO:0007669"/>
    <property type="project" value="TreeGrafter"/>
</dbReference>
<dbReference type="GO" id="GO:0006388">
    <property type="term" value="P:tRNA splicing, via endonucleolytic cleavage and ligation"/>
    <property type="evidence" value="ECO:0007669"/>
    <property type="project" value="UniProtKB-UniRule"/>
</dbReference>
<dbReference type="Gene3D" id="3.20.170.30">
    <property type="match status" value="1"/>
</dbReference>
<dbReference type="Gene3D" id="1.10.10.970">
    <property type="entry name" value="RNA 2'-phosphotransferase, Tpt1/KptA family, N-terminal domain"/>
    <property type="match status" value="1"/>
</dbReference>
<dbReference type="HAMAP" id="MF_00299">
    <property type="entry name" value="KptA"/>
    <property type="match status" value="1"/>
</dbReference>
<dbReference type="InterPro" id="IPR002745">
    <property type="entry name" value="Ptrans_KptA/Tpt1"/>
</dbReference>
<dbReference type="InterPro" id="IPR042081">
    <property type="entry name" value="RNA_2'-PTrans_C"/>
</dbReference>
<dbReference type="InterPro" id="IPR022928">
    <property type="entry name" value="RNA_2'-PTrans_KptA"/>
</dbReference>
<dbReference type="InterPro" id="IPR042080">
    <property type="entry name" value="RNA_2'-PTrans_N"/>
</dbReference>
<dbReference type="PANTHER" id="PTHR12684">
    <property type="entry name" value="PUTATIVE PHOSPHOTRANSFERASE"/>
    <property type="match status" value="1"/>
</dbReference>
<dbReference type="PANTHER" id="PTHR12684:SF2">
    <property type="entry name" value="TRNA 2'-PHOSPHOTRANSFERASE 1"/>
    <property type="match status" value="1"/>
</dbReference>
<dbReference type="Pfam" id="PF01885">
    <property type="entry name" value="PTS_2-RNA"/>
    <property type="match status" value="1"/>
</dbReference>
<dbReference type="SUPFAM" id="SSF56399">
    <property type="entry name" value="ADP-ribosylation"/>
    <property type="match status" value="1"/>
</dbReference>
<proteinExistence type="inferred from homology"/>
<name>KPTA_THEVO</name>
<feature type="chain" id="PRO_0000157496" description="Probable RNA 2'-phosphotransferase">
    <location>
        <begin position="1"/>
        <end position="235"/>
    </location>
</feature>
<reference key="1">
    <citation type="journal article" date="2000" name="Proc. Natl. Acad. Sci. U.S.A.">
        <title>Archaeal adaptation to higher temperatures revealed by genomic sequence of Thermoplasma volcanium.</title>
        <authorList>
            <person name="Kawashima T."/>
            <person name="Amano N."/>
            <person name="Koike H."/>
            <person name="Makino S."/>
            <person name="Higuchi S."/>
            <person name="Kawashima-Ohya Y."/>
            <person name="Watanabe K."/>
            <person name="Yamazaki M."/>
            <person name="Kanehori K."/>
            <person name="Kawamoto T."/>
            <person name="Nunoshiba T."/>
            <person name="Yamamoto Y."/>
            <person name="Aramaki H."/>
            <person name="Makino K."/>
            <person name="Suzuki M."/>
        </authorList>
    </citation>
    <scope>NUCLEOTIDE SEQUENCE [LARGE SCALE GENOMIC DNA]</scope>
    <source>
        <strain>ATCC 51530 / DSM 4299 / JCM 9571 / NBRC 15438 / GSS1</strain>
    </source>
</reference>
<organism>
    <name type="scientific">Thermoplasma volcanium (strain ATCC 51530 / DSM 4299 / JCM 9571 / NBRC 15438 / GSS1)</name>
    <dbReference type="NCBI Taxonomy" id="273116"/>
    <lineage>
        <taxon>Archaea</taxon>
        <taxon>Methanobacteriati</taxon>
        <taxon>Thermoplasmatota</taxon>
        <taxon>Thermoplasmata</taxon>
        <taxon>Thermoplasmatales</taxon>
        <taxon>Thermoplasmataceae</taxon>
        <taxon>Thermoplasma</taxon>
    </lineage>
</organism>
<sequence>MPELRYCHGPYRGKECPVCGKPGKIMMNEAEINEVSRTLAAVLRHDPGRYGIRLDSHGYARISSLVSMFRKRKGMRWMTDDHLVYLAETDPRKRYQISGVLIRAVYGHTIDVDLTDLPTDGIPDTLYYQSSTAEAPLVKEAGIYPSDKSWIHLSGTYRKSFVSGLYHIDDPLVLAVNARSMIENGIDIFRSNDDIYLTKQVPPEYITIAEKEEVVLTDEEKDDIKRVREKNSGRD</sequence>
<protein>
    <recommendedName>
        <fullName evidence="1">Probable RNA 2'-phosphotransferase</fullName>
        <ecNumber evidence="1">2.7.1.-</ecNumber>
    </recommendedName>
</protein>
<keyword id="KW-0520">NAD</keyword>
<keyword id="KW-0808">Transferase</keyword>
<comment type="function">
    <text evidence="1">Removes the 2'-phosphate from RNA via an intermediate in which the phosphate is ADP-ribosylated by NAD followed by a presumed transesterification to release the RNA and generate ADP-ribose 1''-2''-cyclic phosphate (APPR&gt;P). May function as an ADP-ribosylase.</text>
</comment>
<comment type="similarity">
    <text evidence="1">Belongs to the KptA/TPT1 family.</text>
</comment>
<accession>Q97CA6</accession>
<evidence type="ECO:0000255" key="1">
    <source>
        <dbReference type="HAMAP-Rule" id="MF_00299"/>
    </source>
</evidence>